<evidence type="ECO:0000250" key="1"/>
<evidence type="ECO:0000305" key="2"/>
<sequence>MTTNTVTLQTAHIVSLGDIEEAKASIKPFIRRTPLIKSMYLSQSITKGNVFLKLENMQFTGSFKFRGASNKINHLTDEQKEKGIIAASAGNHAQGVALTAKLLGIDATIVMPETAPQAKQQATKGYGAKVILKGKNFNETRLYMEELAKENGMTIVHPYDDKFVMAGQGTIGLEILDDIWNVNTVIVPVGGGGLIAGIATALKSFNPSIHIIGVQSENVHGMAESFYKRDLTEHRVDSTIADGCDVKVPGEQTYEVVKHLVDEFILVTEEEIEHAMKDLMQRAKIITEGAGALPTAAILSGKINNKWLEDKNVVALVSGGNVDLTRVSGVIEHGLNIADTSKGVVG</sequence>
<gene>
    <name type="primary">tdcB</name>
    <name type="ordered locus">SAR1450</name>
</gene>
<organism>
    <name type="scientific">Staphylococcus aureus (strain MRSA252)</name>
    <dbReference type="NCBI Taxonomy" id="282458"/>
    <lineage>
        <taxon>Bacteria</taxon>
        <taxon>Bacillati</taxon>
        <taxon>Bacillota</taxon>
        <taxon>Bacilli</taxon>
        <taxon>Bacillales</taxon>
        <taxon>Staphylococcaceae</taxon>
        <taxon>Staphylococcus</taxon>
    </lineage>
</organism>
<dbReference type="EC" id="4.3.1.19"/>
<dbReference type="EMBL" id="BX571856">
    <property type="protein sequence ID" value="CAG40447.1"/>
    <property type="molecule type" value="Genomic_DNA"/>
</dbReference>
<dbReference type="RefSeq" id="WP_000210828.1">
    <property type="nucleotide sequence ID" value="NC_002952.2"/>
</dbReference>
<dbReference type="SMR" id="Q6GGX0"/>
<dbReference type="KEGG" id="sar:SAR1450"/>
<dbReference type="HOGENOM" id="CLU_021152_4_2_9"/>
<dbReference type="UniPathway" id="UPA00052">
    <property type="reaction ID" value="UER00507"/>
</dbReference>
<dbReference type="Proteomes" id="UP000000596">
    <property type="component" value="Chromosome"/>
</dbReference>
<dbReference type="GO" id="GO:0003941">
    <property type="term" value="F:L-serine ammonia-lyase activity"/>
    <property type="evidence" value="ECO:0007669"/>
    <property type="project" value="TreeGrafter"/>
</dbReference>
<dbReference type="GO" id="GO:0000166">
    <property type="term" value="F:nucleotide binding"/>
    <property type="evidence" value="ECO:0007669"/>
    <property type="project" value="UniProtKB-KW"/>
</dbReference>
<dbReference type="GO" id="GO:0030170">
    <property type="term" value="F:pyridoxal phosphate binding"/>
    <property type="evidence" value="ECO:0007669"/>
    <property type="project" value="InterPro"/>
</dbReference>
<dbReference type="GO" id="GO:0004794">
    <property type="term" value="F:threonine deaminase activity"/>
    <property type="evidence" value="ECO:0007669"/>
    <property type="project" value="UniProtKB-EC"/>
</dbReference>
<dbReference type="GO" id="GO:0009097">
    <property type="term" value="P:isoleucine biosynthetic process"/>
    <property type="evidence" value="ECO:0007669"/>
    <property type="project" value="TreeGrafter"/>
</dbReference>
<dbReference type="GO" id="GO:0006565">
    <property type="term" value="P:L-serine catabolic process"/>
    <property type="evidence" value="ECO:0007669"/>
    <property type="project" value="TreeGrafter"/>
</dbReference>
<dbReference type="GO" id="GO:0070689">
    <property type="term" value="P:L-threonine catabolic process to propionate"/>
    <property type="evidence" value="ECO:0007669"/>
    <property type="project" value="UniProtKB-UniPathway"/>
</dbReference>
<dbReference type="CDD" id="cd01562">
    <property type="entry name" value="Thr-dehyd"/>
    <property type="match status" value="1"/>
</dbReference>
<dbReference type="FunFam" id="3.40.50.1100:FF:000007">
    <property type="entry name" value="L-threonine dehydratase catabolic TdcB"/>
    <property type="match status" value="1"/>
</dbReference>
<dbReference type="Gene3D" id="3.40.50.1100">
    <property type="match status" value="2"/>
</dbReference>
<dbReference type="InterPro" id="IPR050147">
    <property type="entry name" value="Ser/Thr_Dehydratase"/>
</dbReference>
<dbReference type="InterPro" id="IPR000634">
    <property type="entry name" value="Ser/Thr_deHydtase_PyrdxlP-BS"/>
</dbReference>
<dbReference type="InterPro" id="IPR005789">
    <property type="entry name" value="Thr_deHydtase_catblc"/>
</dbReference>
<dbReference type="InterPro" id="IPR001926">
    <property type="entry name" value="TrpB-like_PALP"/>
</dbReference>
<dbReference type="InterPro" id="IPR036052">
    <property type="entry name" value="TrpB-like_PALP_sf"/>
</dbReference>
<dbReference type="NCBIfam" id="TIGR01127">
    <property type="entry name" value="ilvA_1Cterm"/>
    <property type="match status" value="1"/>
</dbReference>
<dbReference type="NCBIfam" id="NF006389">
    <property type="entry name" value="PRK08638.1"/>
    <property type="match status" value="1"/>
</dbReference>
<dbReference type="PANTHER" id="PTHR48078:SF6">
    <property type="entry name" value="L-THREONINE DEHYDRATASE CATABOLIC TDCB"/>
    <property type="match status" value="1"/>
</dbReference>
<dbReference type="PANTHER" id="PTHR48078">
    <property type="entry name" value="THREONINE DEHYDRATASE, MITOCHONDRIAL-RELATED"/>
    <property type="match status" value="1"/>
</dbReference>
<dbReference type="Pfam" id="PF00291">
    <property type="entry name" value="PALP"/>
    <property type="match status" value="1"/>
</dbReference>
<dbReference type="SUPFAM" id="SSF53686">
    <property type="entry name" value="Tryptophan synthase beta subunit-like PLP-dependent enzymes"/>
    <property type="match status" value="1"/>
</dbReference>
<dbReference type="PROSITE" id="PS00165">
    <property type="entry name" value="DEHYDRATASE_SER_THR"/>
    <property type="match status" value="1"/>
</dbReference>
<feature type="chain" id="PRO_0000287328" description="L-threonine dehydratase catabolic TdcB">
    <location>
        <begin position="1"/>
        <end position="346"/>
    </location>
</feature>
<feature type="binding site" evidence="1">
    <location>
        <begin position="59"/>
        <end position="60"/>
    </location>
    <ligand>
        <name>AMP</name>
        <dbReference type="ChEBI" id="CHEBI:456215"/>
    </ligand>
</feature>
<feature type="binding site" evidence="1">
    <location>
        <position position="94"/>
    </location>
    <ligand>
        <name>AMP</name>
        <dbReference type="ChEBI" id="CHEBI:456215"/>
    </ligand>
</feature>
<feature type="binding site" evidence="1">
    <location>
        <begin position="125"/>
        <end position="126"/>
    </location>
    <ligand>
        <name>AMP</name>
        <dbReference type="ChEBI" id="CHEBI:456215"/>
    </ligand>
</feature>
<feature type="binding site" evidence="1">
    <location>
        <position position="321"/>
    </location>
    <ligand>
        <name>AMP</name>
        <dbReference type="ChEBI" id="CHEBI:456215"/>
    </ligand>
</feature>
<feature type="modified residue" description="N6-(pyridoxal phosphate)lysine" evidence="1">
    <location>
        <position position="64"/>
    </location>
</feature>
<name>TDCB_STAAR</name>
<protein>
    <recommendedName>
        <fullName>L-threonine dehydratase catabolic TdcB</fullName>
        <ecNumber>4.3.1.19</ecNumber>
    </recommendedName>
    <alternativeName>
        <fullName>Threonine deaminase</fullName>
    </alternativeName>
</protein>
<reference key="1">
    <citation type="journal article" date="2004" name="Proc. Natl. Acad. Sci. U.S.A.">
        <title>Complete genomes of two clinical Staphylococcus aureus strains: evidence for the rapid evolution of virulence and drug resistance.</title>
        <authorList>
            <person name="Holden M.T.G."/>
            <person name="Feil E.J."/>
            <person name="Lindsay J.A."/>
            <person name="Peacock S.J."/>
            <person name="Day N.P.J."/>
            <person name="Enright M.C."/>
            <person name="Foster T.J."/>
            <person name="Moore C.E."/>
            <person name="Hurst L."/>
            <person name="Atkin R."/>
            <person name="Barron A."/>
            <person name="Bason N."/>
            <person name="Bentley S.D."/>
            <person name="Chillingworth C."/>
            <person name="Chillingworth T."/>
            <person name="Churcher C."/>
            <person name="Clark L."/>
            <person name="Corton C."/>
            <person name="Cronin A."/>
            <person name="Doggett J."/>
            <person name="Dowd L."/>
            <person name="Feltwell T."/>
            <person name="Hance Z."/>
            <person name="Harris B."/>
            <person name="Hauser H."/>
            <person name="Holroyd S."/>
            <person name="Jagels K."/>
            <person name="James K.D."/>
            <person name="Lennard N."/>
            <person name="Line A."/>
            <person name="Mayes R."/>
            <person name="Moule S."/>
            <person name="Mungall K."/>
            <person name="Ormond D."/>
            <person name="Quail M.A."/>
            <person name="Rabbinowitsch E."/>
            <person name="Rutherford K.M."/>
            <person name="Sanders M."/>
            <person name="Sharp S."/>
            <person name="Simmonds M."/>
            <person name="Stevens K."/>
            <person name="Whitehead S."/>
            <person name="Barrell B.G."/>
            <person name="Spratt B.G."/>
            <person name="Parkhill J."/>
        </authorList>
    </citation>
    <scope>NUCLEOTIDE SEQUENCE [LARGE SCALE GENOMIC DNA]</scope>
    <source>
        <strain>MRSA252</strain>
    </source>
</reference>
<accession>Q6GGX0</accession>
<proteinExistence type="inferred from homology"/>
<keyword id="KW-0021">Allosteric enzyme</keyword>
<keyword id="KW-0456">Lyase</keyword>
<keyword id="KW-0547">Nucleotide-binding</keyword>
<keyword id="KW-0663">Pyridoxal phosphate</keyword>
<comment type="function">
    <text evidence="1">Catalyzes the anaerobic formation of alpha-ketobutyrate and ammonia from threonine in a two-step reaction. The first step involved a dehydration of threonine and a production of enamine intermediates (aminocrotonate), which tautomerizes to its imine form (iminobutyrate). Both intermediates are unstable and short-lived. The second step is the nonenzymatic hydrolysis of the enamine/imine intermediates to form 2-ketobutyrate and free ammonia. In the low water environment of the cell, the second step is accelerated by RidA (By similarity).</text>
</comment>
<comment type="catalytic activity">
    <reaction>
        <text>L-threonine = 2-oxobutanoate + NH4(+)</text>
        <dbReference type="Rhea" id="RHEA:22108"/>
        <dbReference type="ChEBI" id="CHEBI:16763"/>
        <dbReference type="ChEBI" id="CHEBI:28938"/>
        <dbReference type="ChEBI" id="CHEBI:57926"/>
        <dbReference type="EC" id="4.3.1.19"/>
    </reaction>
</comment>
<comment type="cofactor">
    <cofactor evidence="1">
        <name>pyridoxal 5'-phosphate</name>
        <dbReference type="ChEBI" id="CHEBI:597326"/>
    </cofactor>
</comment>
<comment type="activity regulation">
    <text evidence="1">Each protein molecule can bind up to four molecules of AMP, which act as an allosteric activator to the enzyme.</text>
</comment>
<comment type="pathway">
    <text>Amino-acid degradation; L-threonine degradation via propanoate pathway; propanoate from L-threonine: step 1/4.</text>
</comment>
<comment type="subunit">
    <text evidence="1">In the native structure, TdcB is in a dimeric form, whereas in the TdcB-AMP complex, it exists in a tetrameric form (dimer of dimers).</text>
</comment>
<comment type="similarity">
    <text evidence="2">Belongs to the serine/threonine dehydratase family.</text>
</comment>